<dbReference type="EC" id="2.7.1.24" evidence="1"/>
<dbReference type="EMBL" id="BA000030">
    <property type="protein sequence ID" value="BAC73946.1"/>
    <property type="status" value="ALT_INIT"/>
    <property type="molecule type" value="Genomic_DNA"/>
</dbReference>
<dbReference type="RefSeq" id="WP_037646939.1">
    <property type="nucleotide sequence ID" value="NZ_JZJK01000089.1"/>
</dbReference>
<dbReference type="SMR" id="Q82A24"/>
<dbReference type="GeneID" id="41543311"/>
<dbReference type="KEGG" id="sma:SAVERM_6235"/>
<dbReference type="eggNOG" id="COG0237">
    <property type="taxonomic scope" value="Bacteria"/>
</dbReference>
<dbReference type="HOGENOM" id="CLU_057180_1_1_11"/>
<dbReference type="OrthoDB" id="9812943at2"/>
<dbReference type="UniPathway" id="UPA00241">
    <property type="reaction ID" value="UER00356"/>
</dbReference>
<dbReference type="Proteomes" id="UP000000428">
    <property type="component" value="Chromosome"/>
</dbReference>
<dbReference type="GO" id="GO:0005737">
    <property type="term" value="C:cytoplasm"/>
    <property type="evidence" value="ECO:0007669"/>
    <property type="project" value="UniProtKB-SubCell"/>
</dbReference>
<dbReference type="GO" id="GO:0005524">
    <property type="term" value="F:ATP binding"/>
    <property type="evidence" value="ECO:0007669"/>
    <property type="project" value="UniProtKB-UniRule"/>
</dbReference>
<dbReference type="GO" id="GO:0004140">
    <property type="term" value="F:dephospho-CoA kinase activity"/>
    <property type="evidence" value="ECO:0007669"/>
    <property type="project" value="UniProtKB-UniRule"/>
</dbReference>
<dbReference type="GO" id="GO:0015937">
    <property type="term" value="P:coenzyme A biosynthetic process"/>
    <property type="evidence" value="ECO:0007669"/>
    <property type="project" value="UniProtKB-UniRule"/>
</dbReference>
<dbReference type="CDD" id="cd02022">
    <property type="entry name" value="DPCK"/>
    <property type="match status" value="1"/>
</dbReference>
<dbReference type="FunFam" id="3.40.50.300:FF:000991">
    <property type="entry name" value="Dephospho-CoA kinase"/>
    <property type="match status" value="1"/>
</dbReference>
<dbReference type="Gene3D" id="3.40.50.300">
    <property type="entry name" value="P-loop containing nucleotide triphosphate hydrolases"/>
    <property type="match status" value="1"/>
</dbReference>
<dbReference type="HAMAP" id="MF_00376">
    <property type="entry name" value="Dephospho_CoA_kinase"/>
    <property type="match status" value="1"/>
</dbReference>
<dbReference type="InterPro" id="IPR001977">
    <property type="entry name" value="Depp_CoAkinase"/>
</dbReference>
<dbReference type="InterPro" id="IPR027417">
    <property type="entry name" value="P-loop_NTPase"/>
</dbReference>
<dbReference type="NCBIfam" id="TIGR00152">
    <property type="entry name" value="dephospho-CoA kinase"/>
    <property type="match status" value="1"/>
</dbReference>
<dbReference type="NCBIfam" id="NF002879">
    <property type="entry name" value="PRK03333.1"/>
    <property type="match status" value="1"/>
</dbReference>
<dbReference type="PANTHER" id="PTHR10695:SF46">
    <property type="entry name" value="BIFUNCTIONAL COENZYME A SYNTHASE-RELATED"/>
    <property type="match status" value="1"/>
</dbReference>
<dbReference type="PANTHER" id="PTHR10695">
    <property type="entry name" value="DEPHOSPHO-COA KINASE-RELATED"/>
    <property type="match status" value="1"/>
</dbReference>
<dbReference type="Pfam" id="PF01121">
    <property type="entry name" value="CoaE"/>
    <property type="match status" value="1"/>
</dbReference>
<dbReference type="SUPFAM" id="SSF52540">
    <property type="entry name" value="P-loop containing nucleoside triphosphate hydrolases"/>
    <property type="match status" value="1"/>
</dbReference>
<dbReference type="PROSITE" id="PS51219">
    <property type="entry name" value="DPCK"/>
    <property type="match status" value="1"/>
</dbReference>
<sequence length="205" mass="21746">MLKVGLTGGIGAGKSEVSRLLVEHGAVLIDADRIAREVVAPGTPGLAAVVEAFGTDVLAPDGSLDRPKLGSIVFADPDKLAVLNAIVHPLVGARSRELETAAAADAVVIHDVPLLAENGLAPLYDLVVVVDASPETQLDRLVRLRGMTEQDARARMAAQATREKRLAIADIVMDNDVPLEELERRVGDVWADLVHRAHQPGESQE</sequence>
<proteinExistence type="inferred from homology"/>
<evidence type="ECO:0000255" key="1">
    <source>
        <dbReference type="HAMAP-Rule" id="MF_00376"/>
    </source>
</evidence>
<evidence type="ECO:0000305" key="2"/>
<comment type="function">
    <text evidence="1">Catalyzes the phosphorylation of the 3'-hydroxyl group of dephosphocoenzyme A to form coenzyme A.</text>
</comment>
<comment type="catalytic activity">
    <reaction evidence="1">
        <text>3'-dephospho-CoA + ATP = ADP + CoA + H(+)</text>
        <dbReference type="Rhea" id="RHEA:18245"/>
        <dbReference type="ChEBI" id="CHEBI:15378"/>
        <dbReference type="ChEBI" id="CHEBI:30616"/>
        <dbReference type="ChEBI" id="CHEBI:57287"/>
        <dbReference type="ChEBI" id="CHEBI:57328"/>
        <dbReference type="ChEBI" id="CHEBI:456216"/>
        <dbReference type="EC" id="2.7.1.24"/>
    </reaction>
</comment>
<comment type="pathway">
    <text evidence="1">Cofactor biosynthesis; coenzyme A biosynthesis; CoA from (R)-pantothenate: step 5/5.</text>
</comment>
<comment type="subcellular location">
    <subcellularLocation>
        <location evidence="1">Cytoplasm</location>
    </subcellularLocation>
</comment>
<comment type="similarity">
    <text evidence="1">Belongs to the CoaE family.</text>
</comment>
<comment type="sequence caution" evidence="2">
    <conflict type="erroneous initiation">
        <sequence resource="EMBL-CDS" id="BAC73946"/>
    </conflict>
</comment>
<protein>
    <recommendedName>
        <fullName evidence="1">Dephospho-CoA kinase</fullName>
        <ecNumber evidence="1">2.7.1.24</ecNumber>
    </recommendedName>
    <alternativeName>
        <fullName evidence="1">Dephosphocoenzyme A kinase</fullName>
    </alternativeName>
</protein>
<feature type="chain" id="PRO_0000173009" description="Dephospho-CoA kinase">
    <location>
        <begin position="1"/>
        <end position="205"/>
    </location>
</feature>
<feature type="domain" description="DPCK" evidence="1">
    <location>
        <begin position="3"/>
        <end position="204"/>
    </location>
</feature>
<feature type="binding site" evidence="1">
    <location>
        <begin position="11"/>
        <end position="16"/>
    </location>
    <ligand>
        <name>ATP</name>
        <dbReference type="ChEBI" id="CHEBI:30616"/>
    </ligand>
</feature>
<gene>
    <name evidence="1" type="primary">coaE</name>
    <name type="ordered locus">SAV_6235</name>
</gene>
<reference key="1">
    <citation type="journal article" date="2001" name="Proc. Natl. Acad. Sci. U.S.A.">
        <title>Genome sequence of an industrial microorganism Streptomyces avermitilis: deducing the ability of producing secondary metabolites.</title>
        <authorList>
            <person name="Omura S."/>
            <person name="Ikeda H."/>
            <person name="Ishikawa J."/>
            <person name="Hanamoto A."/>
            <person name="Takahashi C."/>
            <person name="Shinose M."/>
            <person name="Takahashi Y."/>
            <person name="Horikawa H."/>
            <person name="Nakazawa H."/>
            <person name="Osonoe T."/>
            <person name="Kikuchi H."/>
            <person name="Shiba T."/>
            <person name="Sakaki Y."/>
            <person name="Hattori M."/>
        </authorList>
    </citation>
    <scope>NUCLEOTIDE SEQUENCE [LARGE SCALE GENOMIC DNA]</scope>
    <source>
        <strain>ATCC 31267 / DSM 46492 / JCM 5070 / NBRC 14893 / NCIMB 12804 / NRRL 8165 / MA-4680</strain>
    </source>
</reference>
<reference key="2">
    <citation type="journal article" date="2003" name="Nat. Biotechnol.">
        <title>Complete genome sequence and comparative analysis of the industrial microorganism Streptomyces avermitilis.</title>
        <authorList>
            <person name="Ikeda H."/>
            <person name="Ishikawa J."/>
            <person name="Hanamoto A."/>
            <person name="Shinose M."/>
            <person name="Kikuchi H."/>
            <person name="Shiba T."/>
            <person name="Sakaki Y."/>
            <person name="Hattori M."/>
            <person name="Omura S."/>
        </authorList>
    </citation>
    <scope>NUCLEOTIDE SEQUENCE [LARGE SCALE GENOMIC DNA]</scope>
    <source>
        <strain>ATCC 31267 / DSM 46492 / JCM 5070 / NBRC 14893 / NCIMB 12804 / NRRL 8165 / MA-4680</strain>
    </source>
</reference>
<keyword id="KW-0067">ATP-binding</keyword>
<keyword id="KW-0173">Coenzyme A biosynthesis</keyword>
<keyword id="KW-0963">Cytoplasm</keyword>
<keyword id="KW-0418">Kinase</keyword>
<keyword id="KW-0547">Nucleotide-binding</keyword>
<keyword id="KW-1185">Reference proteome</keyword>
<keyword id="KW-0808">Transferase</keyword>
<name>COAE_STRAW</name>
<organism>
    <name type="scientific">Streptomyces avermitilis (strain ATCC 31267 / DSM 46492 / JCM 5070 / NBRC 14893 / NCIMB 12804 / NRRL 8165 / MA-4680)</name>
    <dbReference type="NCBI Taxonomy" id="227882"/>
    <lineage>
        <taxon>Bacteria</taxon>
        <taxon>Bacillati</taxon>
        <taxon>Actinomycetota</taxon>
        <taxon>Actinomycetes</taxon>
        <taxon>Kitasatosporales</taxon>
        <taxon>Streptomycetaceae</taxon>
        <taxon>Streptomyces</taxon>
    </lineage>
</organism>
<accession>Q82A24</accession>